<keyword id="KW-0067">ATP-binding</keyword>
<keyword id="KW-0963">Cytoplasm</keyword>
<keyword id="KW-0418">Kinase</keyword>
<keyword id="KW-0479">Metal-binding</keyword>
<keyword id="KW-0545">Nucleotide biosynthesis</keyword>
<keyword id="KW-0547">Nucleotide-binding</keyword>
<keyword id="KW-0808">Transferase</keyword>
<keyword id="KW-0862">Zinc</keyword>
<evidence type="ECO:0000255" key="1">
    <source>
        <dbReference type="HAMAP-Rule" id="MF_00235"/>
    </source>
</evidence>
<protein>
    <recommendedName>
        <fullName evidence="1">Adenylate kinase</fullName>
        <shortName evidence="1">AK</shortName>
        <ecNumber evidence="1">2.7.4.3</ecNumber>
    </recommendedName>
    <alternativeName>
        <fullName evidence="1">ATP-AMP transphosphorylase</fullName>
    </alternativeName>
    <alternativeName>
        <fullName evidence="1">ATP:AMP phosphotransferase</fullName>
    </alternativeName>
    <alternativeName>
        <fullName evidence="1">Adenylate monophosphate kinase</fullName>
    </alternativeName>
</protein>
<gene>
    <name evidence="1" type="primary">adk</name>
    <name type="ordered locus">lin2760</name>
</gene>
<proteinExistence type="inferred from homology"/>
<sequence length="215" mass="24164">MKLVLMGLPGAGKGTQAEQIVEKYNIPHISTGDMFRAAMKNNTELGKKAKSFMDNGDLVPDEVTNGIVRERLAEDDAKNGFLLDGFPRTVEQAEELENILSDLGTELDAVINIEVDKDVLMKRLTGRWICRTCGKTYHEIYNPPKVPGKCDLDGGELYQREDDKKETVENRLNVNMKQTKPLLDFYSEKGKLHSINGEQDINDVFVDVEKILASF</sequence>
<reference key="1">
    <citation type="journal article" date="2001" name="Science">
        <title>Comparative genomics of Listeria species.</title>
        <authorList>
            <person name="Glaser P."/>
            <person name="Frangeul L."/>
            <person name="Buchrieser C."/>
            <person name="Rusniok C."/>
            <person name="Amend A."/>
            <person name="Baquero F."/>
            <person name="Berche P."/>
            <person name="Bloecker H."/>
            <person name="Brandt P."/>
            <person name="Chakraborty T."/>
            <person name="Charbit A."/>
            <person name="Chetouani F."/>
            <person name="Couve E."/>
            <person name="de Daruvar A."/>
            <person name="Dehoux P."/>
            <person name="Domann E."/>
            <person name="Dominguez-Bernal G."/>
            <person name="Duchaud E."/>
            <person name="Durant L."/>
            <person name="Dussurget O."/>
            <person name="Entian K.-D."/>
            <person name="Fsihi H."/>
            <person name="Garcia-del Portillo F."/>
            <person name="Garrido P."/>
            <person name="Gautier L."/>
            <person name="Goebel W."/>
            <person name="Gomez-Lopez N."/>
            <person name="Hain T."/>
            <person name="Hauf J."/>
            <person name="Jackson D."/>
            <person name="Jones L.-M."/>
            <person name="Kaerst U."/>
            <person name="Kreft J."/>
            <person name="Kuhn M."/>
            <person name="Kunst F."/>
            <person name="Kurapkat G."/>
            <person name="Madueno E."/>
            <person name="Maitournam A."/>
            <person name="Mata Vicente J."/>
            <person name="Ng E."/>
            <person name="Nedjari H."/>
            <person name="Nordsiek G."/>
            <person name="Novella S."/>
            <person name="de Pablos B."/>
            <person name="Perez-Diaz J.-C."/>
            <person name="Purcell R."/>
            <person name="Remmel B."/>
            <person name="Rose M."/>
            <person name="Schlueter T."/>
            <person name="Simoes N."/>
            <person name="Tierrez A."/>
            <person name="Vazquez-Boland J.-A."/>
            <person name="Voss H."/>
            <person name="Wehland J."/>
            <person name="Cossart P."/>
        </authorList>
    </citation>
    <scope>NUCLEOTIDE SEQUENCE [LARGE SCALE GENOMIC DNA]</scope>
    <source>
        <strain>ATCC BAA-680 / CLIP 11262</strain>
    </source>
</reference>
<feature type="chain" id="PRO_0000158787" description="Adenylate kinase">
    <location>
        <begin position="1"/>
        <end position="215"/>
    </location>
</feature>
<feature type="region of interest" description="NMP" evidence="1">
    <location>
        <begin position="30"/>
        <end position="59"/>
    </location>
</feature>
<feature type="region of interest" description="LID" evidence="1">
    <location>
        <begin position="126"/>
        <end position="163"/>
    </location>
</feature>
<feature type="binding site" evidence="1">
    <location>
        <begin position="10"/>
        <end position="15"/>
    </location>
    <ligand>
        <name>ATP</name>
        <dbReference type="ChEBI" id="CHEBI:30616"/>
    </ligand>
</feature>
<feature type="binding site" evidence="1">
    <location>
        <position position="31"/>
    </location>
    <ligand>
        <name>AMP</name>
        <dbReference type="ChEBI" id="CHEBI:456215"/>
    </ligand>
</feature>
<feature type="binding site" evidence="1">
    <location>
        <position position="36"/>
    </location>
    <ligand>
        <name>AMP</name>
        <dbReference type="ChEBI" id="CHEBI:456215"/>
    </ligand>
</feature>
<feature type="binding site" evidence="1">
    <location>
        <begin position="57"/>
        <end position="59"/>
    </location>
    <ligand>
        <name>AMP</name>
        <dbReference type="ChEBI" id="CHEBI:456215"/>
    </ligand>
</feature>
<feature type="binding site" evidence="1">
    <location>
        <begin position="85"/>
        <end position="88"/>
    </location>
    <ligand>
        <name>AMP</name>
        <dbReference type="ChEBI" id="CHEBI:456215"/>
    </ligand>
</feature>
<feature type="binding site" evidence="1">
    <location>
        <position position="92"/>
    </location>
    <ligand>
        <name>AMP</name>
        <dbReference type="ChEBI" id="CHEBI:456215"/>
    </ligand>
</feature>
<feature type="binding site" evidence="1">
    <location>
        <position position="127"/>
    </location>
    <ligand>
        <name>ATP</name>
        <dbReference type="ChEBI" id="CHEBI:30616"/>
    </ligand>
</feature>
<feature type="binding site" evidence="1">
    <location>
        <position position="130"/>
    </location>
    <ligand>
        <name>Zn(2+)</name>
        <dbReference type="ChEBI" id="CHEBI:29105"/>
        <note>structural</note>
    </ligand>
</feature>
<feature type="binding site" evidence="1">
    <location>
        <position position="133"/>
    </location>
    <ligand>
        <name>Zn(2+)</name>
        <dbReference type="ChEBI" id="CHEBI:29105"/>
        <note>structural</note>
    </ligand>
</feature>
<feature type="binding site" evidence="1">
    <location>
        <begin position="136"/>
        <end position="137"/>
    </location>
    <ligand>
        <name>ATP</name>
        <dbReference type="ChEBI" id="CHEBI:30616"/>
    </ligand>
</feature>
<feature type="binding site" evidence="1">
    <location>
        <position position="150"/>
    </location>
    <ligand>
        <name>Zn(2+)</name>
        <dbReference type="ChEBI" id="CHEBI:29105"/>
        <note>structural</note>
    </ligand>
</feature>
<feature type="binding site" evidence="1">
    <location>
        <position position="153"/>
    </location>
    <ligand>
        <name>Zn(2+)</name>
        <dbReference type="ChEBI" id="CHEBI:29105"/>
        <note>structural</note>
    </ligand>
</feature>
<feature type="binding site" evidence="1">
    <location>
        <position position="160"/>
    </location>
    <ligand>
        <name>AMP</name>
        <dbReference type="ChEBI" id="CHEBI:456215"/>
    </ligand>
</feature>
<feature type="binding site" evidence="1">
    <location>
        <position position="171"/>
    </location>
    <ligand>
        <name>AMP</name>
        <dbReference type="ChEBI" id="CHEBI:456215"/>
    </ligand>
</feature>
<feature type="binding site" evidence="1">
    <location>
        <position position="199"/>
    </location>
    <ligand>
        <name>ATP</name>
        <dbReference type="ChEBI" id="CHEBI:30616"/>
    </ligand>
</feature>
<organism>
    <name type="scientific">Listeria innocua serovar 6a (strain ATCC BAA-680 / CLIP 11262)</name>
    <dbReference type="NCBI Taxonomy" id="272626"/>
    <lineage>
        <taxon>Bacteria</taxon>
        <taxon>Bacillati</taxon>
        <taxon>Bacillota</taxon>
        <taxon>Bacilli</taxon>
        <taxon>Bacillales</taxon>
        <taxon>Listeriaceae</taxon>
        <taxon>Listeria</taxon>
    </lineage>
</organism>
<accession>Q927M8</accession>
<name>KAD_LISIN</name>
<dbReference type="EC" id="2.7.4.3" evidence="1"/>
<dbReference type="EMBL" id="AL596173">
    <property type="protein sequence ID" value="CAC97986.1"/>
    <property type="molecule type" value="Genomic_DNA"/>
</dbReference>
<dbReference type="PIR" id="AB1777">
    <property type="entry name" value="AB1777"/>
</dbReference>
<dbReference type="RefSeq" id="WP_003768462.1">
    <property type="nucleotide sequence ID" value="NC_003212.1"/>
</dbReference>
<dbReference type="SMR" id="Q927M8"/>
<dbReference type="STRING" id="272626.gene:17567147"/>
<dbReference type="KEGG" id="lin:adk"/>
<dbReference type="eggNOG" id="COG0563">
    <property type="taxonomic scope" value="Bacteria"/>
</dbReference>
<dbReference type="HOGENOM" id="CLU_032354_1_2_9"/>
<dbReference type="OrthoDB" id="9805030at2"/>
<dbReference type="UniPathway" id="UPA00588">
    <property type="reaction ID" value="UER00649"/>
</dbReference>
<dbReference type="Proteomes" id="UP000002513">
    <property type="component" value="Chromosome"/>
</dbReference>
<dbReference type="GO" id="GO:0005737">
    <property type="term" value="C:cytoplasm"/>
    <property type="evidence" value="ECO:0007669"/>
    <property type="project" value="UniProtKB-SubCell"/>
</dbReference>
<dbReference type="GO" id="GO:0004017">
    <property type="term" value="F:adenylate kinase activity"/>
    <property type="evidence" value="ECO:0007669"/>
    <property type="project" value="UniProtKB-UniRule"/>
</dbReference>
<dbReference type="GO" id="GO:0005524">
    <property type="term" value="F:ATP binding"/>
    <property type="evidence" value="ECO:0007669"/>
    <property type="project" value="UniProtKB-UniRule"/>
</dbReference>
<dbReference type="GO" id="GO:0008270">
    <property type="term" value="F:zinc ion binding"/>
    <property type="evidence" value="ECO:0007669"/>
    <property type="project" value="UniProtKB-UniRule"/>
</dbReference>
<dbReference type="GO" id="GO:0044209">
    <property type="term" value="P:AMP salvage"/>
    <property type="evidence" value="ECO:0007669"/>
    <property type="project" value="UniProtKB-UniRule"/>
</dbReference>
<dbReference type="CDD" id="cd01428">
    <property type="entry name" value="ADK"/>
    <property type="match status" value="1"/>
</dbReference>
<dbReference type="FunFam" id="3.40.50.300:FF:000106">
    <property type="entry name" value="Adenylate kinase mitochondrial"/>
    <property type="match status" value="1"/>
</dbReference>
<dbReference type="Gene3D" id="3.40.50.300">
    <property type="entry name" value="P-loop containing nucleotide triphosphate hydrolases"/>
    <property type="match status" value="1"/>
</dbReference>
<dbReference type="HAMAP" id="MF_00235">
    <property type="entry name" value="Adenylate_kinase_Adk"/>
    <property type="match status" value="1"/>
</dbReference>
<dbReference type="InterPro" id="IPR006259">
    <property type="entry name" value="Adenyl_kin_sub"/>
</dbReference>
<dbReference type="InterPro" id="IPR000850">
    <property type="entry name" value="Adenylat/UMP-CMP_kin"/>
</dbReference>
<dbReference type="InterPro" id="IPR033690">
    <property type="entry name" value="Adenylat_kinase_CS"/>
</dbReference>
<dbReference type="InterPro" id="IPR007862">
    <property type="entry name" value="Adenylate_kinase_lid-dom"/>
</dbReference>
<dbReference type="InterPro" id="IPR027417">
    <property type="entry name" value="P-loop_NTPase"/>
</dbReference>
<dbReference type="NCBIfam" id="TIGR01351">
    <property type="entry name" value="adk"/>
    <property type="match status" value="1"/>
</dbReference>
<dbReference type="NCBIfam" id="NF001380">
    <property type="entry name" value="PRK00279.1-2"/>
    <property type="match status" value="1"/>
</dbReference>
<dbReference type="NCBIfam" id="NF001381">
    <property type="entry name" value="PRK00279.1-3"/>
    <property type="match status" value="1"/>
</dbReference>
<dbReference type="NCBIfam" id="NF011100">
    <property type="entry name" value="PRK14527.1"/>
    <property type="match status" value="1"/>
</dbReference>
<dbReference type="PANTHER" id="PTHR23359">
    <property type="entry name" value="NUCLEOTIDE KINASE"/>
    <property type="match status" value="1"/>
</dbReference>
<dbReference type="Pfam" id="PF00406">
    <property type="entry name" value="ADK"/>
    <property type="match status" value="1"/>
</dbReference>
<dbReference type="Pfam" id="PF05191">
    <property type="entry name" value="ADK_lid"/>
    <property type="match status" value="1"/>
</dbReference>
<dbReference type="PRINTS" id="PR00094">
    <property type="entry name" value="ADENYLTKNASE"/>
</dbReference>
<dbReference type="SUPFAM" id="SSF52540">
    <property type="entry name" value="P-loop containing nucleoside triphosphate hydrolases"/>
    <property type="match status" value="1"/>
</dbReference>
<dbReference type="PROSITE" id="PS00113">
    <property type="entry name" value="ADENYLATE_KINASE"/>
    <property type="match status" value="1"/>
</dbReference>
<comment type="function">
    <text evidence="1">Catalyzes the reversible transfer of the terminal phosphate group between ATP and AMP. Plays an important role in cellular energy homeostasis and in adenine nucleotide metabolism.</text>
</comment>
<comment type="catalytic activity">
    <reaction evidence="1">
        <text>AMP + ATP = 2 ADP</text>
        <dbReference type="Rhea" id="RHEA:12973"/>
        <dbReference type="ChEBI" id="CHEBI:30616"/>
        <dbReference type="ChEBI" id="CHEBI:456215"/>
        <dbReference type="ChEBI" id="CHEBI:456216"/>
        <dbReference type="EC" id="2.7.4.3"/>
    </reaction>
</comment>
<comment type="pathway">
    <text evidence="1">Purine metabolism; AMP biosynthesis via salvage pathway; AMP from ADP: step 1/1.</text>
</comment>
<comment type="subunit">
    <text evidence="1">Monomer.</text>
</comment>
<comment type="subcellular location">
    <subcellularLocation>
        <location evidence="1">Cytoplasm</location>
    </subcellularLocation>
</comment>
<comment type="domain">
    <text evidence="1">Consists of three domains, a large central CORE domain and two small peripheral domains, NMPbind and LID, which undergo movements during catalysis. The LID domain closes over the site of phosphoryl transfer upon ATP binding. Assembling and dissambling the active center during each catalytic cycle provides an effective means to prevent ATP hydrolysis. Some bacteria have evolved a zinc-coordinating structure that stabilizes the LID domain.</text>
</comment>
<comment type="similarity">
    <text evidence="1">Belongs to the adenylate kinase family.</text>
</comment>